<protein>
    <recommendedName>
        <fullName evidence="1">Proline--tRNA ligase</fullName>
        <ecNumber evidence="1">6.1.1.15</ecNumber>
    </recommendedName>
    <alternativeName>
        <fullName evidence="1">Prolyl-tRNA synthetase</fullName>
        <shortName evidence="1">ProRS</shortName>
    </alternativeName>
</protein>
<name>SYP_TRIV2</name>
<feature type="chain" id="PRO_0000248639" description="Proline--tRNA ligase">
    <location>
        <begin position="1"/>
        <end position="604"/>
    </location>
</feature>
<comment type="function">
    <text evidence="1">Catalyzes the attachment of proline to tRNA(Pro) in a two-step reaction: proline is first activated by ATP to form Pro-AMP and then transferred to the acceptor end of tRNA(Pro). As ProRS can inadvertently accommodate and process non-cognate amino acids such as alanine and cysteine, to avoid such errors it has two additional distinct editing activities against alanine. One activity is designated as 'pretransfer' editing and involves the tRNA(Pro)-independent hydrolysis of activated Ala-AMP. The other activity is designated 'posttransfer' editing and involves deacylation of mischarged Ala-tRNA(Pro). The misacylated Cys-tRNA(Pro) is not edited by ProRS.</text>
</comment>
<comment type="catalytic activity">
    <reaction evidence="1">
        <text>tRNA(Pro) + L-proline + ATP = L-prolyl-tRNA(Pro) + AMP + diphosphate</text>
        <dbReference type="Rhea" id="RHEA:14305"/>
        <dbReference type="Rhea" id="RHEA-COMP:9700"/>
        <dbReference type="Rhea" id="RHEA-COMP:9702"/>
        <dbReference type="ChEBI" id="CHEBI:30616"/>
        <dbReference type="ChEBI" id="CHEBI:33019"/>
        <dbReference type="ChEBI" id="CHEBI:60039"/>
        <dbReference type="ChEBI" id="CHEBI:78442"/>
        <dbReference type="ChEBI" id="CHEBI:78532"/>
        <dbReference type="ChEBI" id="CHEBI:456215"/>
        <dbReference type="EC" id="6.1.1.15"/>
    </reaction>
</comment>
<comment type="subunit">
    <text evidence="1">Homodimer.</text>
</comment>
<comment type="subcellular location">
    <subcellularLocation>
        <location evidence="1">Cytoplasm</location>
    </subcellularLocation>
</comment>
<comment type="domain">
    <text evidence="1">Consists of three domains: the N-terminal catalytic domain, the editing domain and the C-terminal anticodon-binding domain.</text>
</comment>
<comment type="similarity">
    <text evidence="1">Belongs to the class-II aminoacyl-tRNA synthetase family. ProS type 1 subfamily.</text>
</comment>
<accession>Q3MAQ7</accession>
<reference key="1">
    <citation type="journal article" date="2014" name="Stand. Genomic Sci.">
        <title>Complete genome sequence of Anabaena variabilis ATCC 29413.</title>
        <authorList>
            <person name="Thiel T."/>
            <person name="Pratte B.S."/>
            <person name="Zhong J."/>
            <person name="Goodwin L."/>
            <person name="Copeland A."/>
            <person name="Lucas S."/>
            <person name="Han C."/>
            <person name="Pitluck S."/>
            <person name="Land M.L."/>
            <person name="Kyrpides N.C."/>
            <person name="Woyke T."/>
        </authorList>
    </citation>
    <scope>NUCLEOTIDE SEQUENCE [LARGE SCALE GENOMIC DNA]</scope>
    <source>
        <strain>ATCC 29413 / PCC 7937</strain>
    </source>
</reference>
<proteinExistence type="inferred from homology"/>
<dbReference type="EC" id="6.1.1.15" evidence="1"/>
<dbReference type="EMBL" id="CP000117">
    <property type="protein sequence ID" value="ABA21929.1"/>
    <property type="molecule type" value="Genomic_DNA"/>
</dbReference>
<dbReference type="SMR" id="Q3MAQ7"/>
<dbReference type="STRING" id="240292.Ava_2311"/>
<dbReference type="KEGG" id="ava:Ava_2311"/>
<dbReference type="eggNOG" id="COG0442">
    <property type="taxonomic scope" value="Bacteria"/>
</dbReference>
<dbReference type="HOGENOM" id="CLU_016739_0_0_3"/>
<dbReference type="Proteomes" id="UP000002533">
    <property type="component" value="Chromosome"/>
</dbReference>
<dbReference type="GO" id="GO:0005829">
    <property type="term" value="C:cytosol"/>
    <property type="evidence" value="ECO:0007669"/>
    <property type="project" value="TreeGrafter"/>
</dbReference>
<dbReference type="GO" id="GO:0002161">
    <property type="term" value="F:aminoacyl-tRNA deacylase activity"/>
    <property type="evidence" value="ECO:0007669"/>
    <property type="project" value="InterPro"/>
</dbReference>
<dbReference type="GO" id="GO:0005524">
    <property type="term" value="F:ATP binding"/>
    <property type="evidence" value="ECO:0007669"/>
    <property type="project" value="UniProtKB-UniRule"/>
</dbReference>
<dbReference type="GO" id="GO:0004827">
    <property type="term" value="F:proline-tRNA ligase activity"/>
    <property type="evidence" value="ECO:0007669"/>
    <property type="project" value="UniProtKB-UniRule"/>
</dbReference>
<dbReference type="GO" id="GO:0006433">
    <property type="term" value="P:prolyl-tRNA aminoacylation"/>
    <property type="evidence" value="ECO:0007669"/>
    <property type="project" value="UniProtKB-UniRule"/>
</dbReference>
<dbReference type="CDD" id="cd04334">
    <property type="entry name" value="ProRS-INS"/>
    <property type="match status" value="1"/>
</dbReference>
<dbReference type="CDD" id="cd00861">
    <property type="entry name" value="ProRS_anticodon_short"/>
    <property type="match status" value="1"/>
</dbReference>
<dbReference type="CDD" id="cd00779">
    <property type="entry name" value="ProRS_core_prok"/>
    <property type="match status" value="1"/>
</dbReference>
<dbReference type="FunFam" id="3.40.50.800:FF:000011">
    <property type="entry name" value="Proline--tRNA ligase"/>
    <property type="match status" value="1"/>
</dbReference>
<dbReference type="Gene3D" id="3.40.50.800">
    <property type="entry name" value="Anticodon-binding domain"/>
    <property type="match status" value="1"/>
</dbReference>
<dbReference type="Gene3D" id="3.30.930.10">
    <property type="entry name" value="Bira Bifunctional Protein, Domain 2"/>
    <property type="match status" value="2"/>
</dbReference>
<dbReference type="Gene3D" id="3.90.960.10">
    <property type="entry name" value="YbaK/aminoacyl-tRNA synthetase-associated domain"/>
    <property type="match status" value="1"/>
</dbReference>
<dbReference type="HAMAP" id="MF_01569">
    <property type="entry name" value="Pro_tRNA_synth_type1"/>
    <property type="match status" value="1"/>
</dbReference>
<dbReference type="InterPro" id="IPR002314">
    <property type="entry name" value="aa-tRNA-synt_IIb"/>
</dbReference>
<dbReference type="InterPro" id="IPR006195">
    <property type="entry name" value="aa-tRNA-synth_II"/>
</dbReference>
<dbReference type="InterPro" id="IPR045864">
    <property type="entry name" value="aa-tRNA-synth_II/BPL/LPL"/>
</dbReference>
<dbReference type="InterPro" id="IPR004154">
    <property type="entry name" value="Anticodon-bd"/>
</dbReference>
<dbReference type="InterPro" id="IPR036621">
    <property type="entry name" value="Anticodon-bd_dom_sf"/>
</dbReference>
<dbReference type="InterPro" id="IPR002316">
    <property type="entry name" value="Pro-tRNA-ligase_IIa"/>
</dbReference>
<dbReference type="InterPro" id="IPR004500">
    <property type="entry name" value="Pro-tRNA-synth_IIa_bac-type"/>
</dbReference>
<dbReference type="InterPro" id="IPR023717">
    <property type="entry name" value="Pro-tRNA-Synthase_IIa_type1"/>
</dbReference>
<dbReference type="InterPro" id="IPR050062">
    <property type="entry name" value="Pro-tRNA_synthetase"/>
</dbReference>
<dbReference type="InterPro" id="IPR044140">
    <property type="entry name" value="ProRS_anticodon_short"/>
</dbReference>
<dbReference type="InterPro" id="IPR033730">
    <property type="entry name" value="ProRS_core_prok"/>
</dbReference>
<dbReference type="InterPro" id="IPR036754">
    <property type="entry name" value="YbaK/aa-tRNA-synt-asso_dom_sf"/>
</dbReference>
<dbReference type="InterPro" id="IPR007214">
    <property type="entry name" value="YbaK/aa-tRNA-synth-assoc-dom"/>
</dbReference>
<dbReference type="NCBIfam" id="NF006625">
    <property type="entry name" value="PRK09194.1"/>
    <property type="match status" value="1"/>
</dbReference>
<dbReference type="NCBIfam" id="TIGR00409">
    <property type="entry name" value="proS_fam_II"/>
    <property type="match status" value="1"/>
</dbReference>
<dbReference type="PANTHER" id="PTHR42753">
    <property type="entry name" value="MITOCHONDRIAL RIBOSOME PROTEIN L39/PROLYL-TRNA LIGASE FAMILY MEMBER"/>
    <property type="match status" value="1"/>
</dbReference>
<dbReference type="PANTHER" id="PTHR42753:SF2">
    <property type="entry name" value="PROLINE--TRNA LIGASE"/>
    <property type="match status" value="1"/>
</dbReference>
<dbReference type="Pfam" id="PF03129">
    <property type="entry name" value="HGTP_anticodon"/>
    <property type="match status" value="1"/>
</dbReference>
<dbReference type="Pfam" id="PF00587">
    <property type="entry name" value="tRNA-synt_2b"/>
    <property type="match status" value="1"/>
</dbReference>
<dbReference type="Pfam" id="PF04073">
    <property type="entry name" value="tRNA_edit"/>
    <property type="match status" value="1"/>
</dbReference>
<dbReference type="PRINTS" id="PR01046">
    <property type="entry name" value="TRNASYNTHPRO"/>
</dbReference>
<dbReference type="SUPFAM" id="SSF52954">
    <property type="entry name" value="Class II aaRS ABD-related"/>
    <property type="match status" value="1"/>
</dbReference>
<dbReference type="SUPFAM" id="SSF55681">
    <property type="entry name" value="Class II aaRS and biotin synthetases"/>
    <property type="match status" value="1"/>
</dbReference>
<dbReference type="SUPFAM" id="SSF55826">
    <property type="entry name" value="YbaK/ProRS associated domain"/>
    <property type="match status" value="1"/>
</dbReference>
<dbReference type="PROSITE" id="PS50862">
    <property type="entry name" value="AA_TRNA_LIGASE_II"/>
    <property type="match status" value="1"/>
</dbReference>
<organism>
    <name type="scientific">Trichormus variabilis (strain ATCC 29413 / PCC 7937)</name>
    <name type="common">Anabaena variabilis</name>
    <dbReference type="NCBI Taxonomy" id="240292"/>
    <lineage>
        <taxon>Bacteria</taxon>
        <taxon>Bacillati</taxon>
        <taxon>Cyanobacteriota</taxon>
        <taxon>Cyanophyceae</taxon>
        <taxon>Nostocales</taxon>
        <taxon>Nostocaceae</taxon>
        <taxon>Trichormus</taxon>
    </lineage>
</organism>
<sequence length="604" mass="67688">MRLSQMLFVTLRDDPADAEIPSHKLLLRAGYIRRIGSGIYAYLPLMWRVLQKVSQIVREEMNAAGAQECLLPQLQPSELWKESGRWDTYTKAEGIMFSLIDRREQQLGLGPTHEEVITAIARDMIRSYRQLPLHLYQLQTKFRDEIRPRFGLMRGREFIMKDGYSFHVDEDSLKKTYQDMYQAYSNMLRRAGLAFRPVEADSGAIGGSGSTEFMVLAEAGEDEVLYTDDGKYAANVEKAVSLPADAEPSQFTAFEKRETPGTETIEKVTQFLKASPTQIVKNVLYQTVYDNGVTVLVLVIIRGDQEVNEVKLQNELTKLAPNYGAKAIINLTVPSAENQQTWTAKSLPLGYIAPDIADEYIAANKQIHPKFVRFVDKTAVDLKNFITGANEAGYHVVGANWGEQFPLPEIVVDVRKARPGDRAIHDSTQILKSARGIEVGHIFQLGTKYSQALGATYTNEQGEEKPLVMGCYGVGVSRLAQSAVEQSYDKDGIIWPVAIAPYHAIVTIPNINDAQQVEIAERLYTELNQSGVETLLDDRNERAGVKFKDADLIGIPYRIVTGRAITNGKVEIVERATRQSQEIPIDEVITTLQQWIKAAIEQKN</sequence>
<evidence type="ECO:0000255" key="1">
    <source>
        <dbReference type="HAMAP-Rule" id="MF_01569"/>
    </source>
</evidence>
<gene>
    <name evidence="1" type="primary">proS</name>
    <name type="ordered locus">Ava_2311</name>
</gene>
<keyword id="KW-0030">Aminoacyl-tRNA synthetase</keyword>
<keyword id="KW-0067">ATP-binding</keyword>
<keyword id="KW-0963">Cytoplasm</keyword>
<keyword id="KW-0436">Ligase</keyword>
<keyword id="KW-0547">Nucleotide-binding</keyword>
<keyword id="KW-0648">Protein biosynthesis</keyword>